<name>RUVA_METNO</name>
<sequence length="205" mass="21475">MIGKLKGVVDSYGEDFVILDVHGVGYVVHCSARTLQRLPPVGEAADLAIETHVREDMIRLYGFRSDAEREWFRLLQTVQGVGTRVALGVLSVLEPADLATAIATGDKGAIARAPGVGPRLAARLVAELKDKAPAFAPVDPALIRLAGAVEERTAPQPVADAISALVNLGYPQIQASAAVAAALQGAGEGAEAKTLIRLGLRELAR</sequence>
<gene>
    <name evidence="1" type="primary">ruvA</name>
    <name type="ordered locus">Mnod_1372</name>
</gene>
<comment type="function">
    <text evidence="1">The RuvA-RuvB-RuvC complex processes Holliday junction (HJ) DNA during genetic recombination and DNA repair, while the RuvA-RuvB complex plays an important role in the rescue of blocked DNA replication forks via replication fork reversal (RFR). RuvA specifically binds to HJ cruciform DNA, conferring on it an open structure. The RuvB hexamer acts as an ATP-dependent pump, pulling dsDNA into and through the RuvAB complex. HJ branch migration allows RuvC to scan DNA until it finds its consensus sequence, where it cleaves and resolves the cruciform DNA.</text>
</comment>
<comment type="subunit">
    <text evidence="1">Homotetramer. Forms an RuvA(8)-RuvB(12)-Holliday junction (HJ) complex. HJ DNA is sandwiched between 2 RuvA tetramers; dsDNA enters through RuvA and exits via RuvB. An RuvB hexamer assembles on each DNA strand where it exits the tetramer. Each RuvB hexamer is contacted by two RuvA subunits (via domain III) on 2 adjacent RuvB subunits; this complex drives branch migration. In the full resolvosome a probable DNA-RuvA(4)-RuvB(12)-RuvC(2) complex forms which resolves the HJ.</text>
</comment>
<comment type="subcellular location">
    <subcellularLocation>
        <location evidence="1">Cytoplasm</location>
    </subcellularLocation>
</comment>
<comment type="domain">
    <text evidence="1">Has three domains with a flexible linker between the domains II and III and assumes an 'L' shape. Domain III is highly mobile and contacts RuvB.</text>
</comment>
<comment type="similarity">
    <text evidence="1">Belongs to the RuvA family.</text>
</comment>
<protein>
    <recommendedName>
        <fullName evidence="1">Holliday junction branch migration complex subunit RuvA</fullName>
    </recommendedName>
</protein>
<accession>B8IM27</accession>
<feature type="chain" id="PRO_1000195157" description="Holliday junction branch migration complex subunit RuvA">
    <location>
        <begin position="1"/>
        <end position="205"/>
    </location>
</feature>
<feature type="region of interest" description="Domain I" evidence="1">
    <location>
        <begin position="1"/>
        <end position="64"/>
    </location>
</feature>
<feature type="region of interest" description="Domain II" evidence="1">
    <location>
        <begin position="65"/>
        <end position="143"/>
    </location>
</feature>
<feature type="region of interest" description="Flexible linker" evidence="1">
    <location>
        <begin position="144"/>
        <end position="152"/>
    </location>
</feature>
<feature type="region of interest" description="Domain III" evidence="1">
    <location>
        <begin position="153"/>
        <end position="205"/>
    </location>
</feature>
<dbReference type="EMBL" id="CP001349">
    <property type="protein sequence ID" value="ACL56371.1"/>
    <property type="molecule type" value="Genomic_DNA"/>
</dbReference>
<dbReference type="RefSeq" id="WP_015928067.1">
    <property type="nucleotide sequence ID" value="NC_011894.1"/>
</dbReference>
<dbReference type="SMR" id="B8IM27"/>
<dbReference type="STRING" id="460265.Mnod_1372"/>
<dbReference type="KEGG" id="mno:Mnod_1372"/>
<dbReference type="eggNOG" id="COG0632">
    <property type="taxonomic scope" value="Bacteria"/>
</dbReference>
<dbReference type="HOGENOM" id="CLU_087936_3_0_5"/>
<dbReference type="OrthoDB" id="5293449at2"/>
<dbReference type="Proteomes" id="UP000008207">
    <property type="component" value="Chromosome"/>
</dbReference>
<dbReference type="GO" id="GO:0005737">
    <property type="term" value="C:cytoplasm"/>
    <property type="evidence" value="ECO:0007669"/>
    <property type="project" value="UniProtKB-SubCell"/>
</dbReference>
<dbReference type="GO" id="GO:0009379">
    <property type="term" value="C:Holliday junction helicase complex"/>
    <property type="evidence" value="ECO:0007669"/>
    <property type="project" value="InterPro"/>
</dbReference>
<dbReference type="GO" id="GO:0048476">
    <property type="term" value="C:Holliday junction resolvase complex"/>
    <property type="evidence" value="ECO:0007669"/>
    <property type="project" value="UniProtKB-UniRule"/>
</dbReference>
<dbReference type="GO" id="GO:0005524">
    <property type="term" value="F:ATP binding"/>
    <property type="evidence" value="ECO:0007669"/>
    <property type="project" value="InterPro"/>
</dbReference>
<dbReference type="GO" id="GO:0000400">
    <property type="term" value="F:four-way junction DNA binding"/>
    <property type="evidence" value="ECO:0007669"/>
    <property type="project" value="UniProtKB-UniRule"/>
</dbReference>
<dbReference type="GO" id="GO:0009378">
    <property type="term" value="F:four-way junction helicase activity"/>
    <property type="evidence" value="ECO:0007669"/>
    <property type="project" value="InterPro"/>
</dbReference>
<dbReference type="GO" id="GO:0006310">
    <property type="term" value="P:DNA recombination"/>
    <property type="evidence" value="ECO:0007669"/>
    <property type="project" value="UniProtKB-UniRule"/>
</dbReference>
<dbReference type="GO" id="GO:0006281">
    <property type="term" value="P:DNA repair"/>
    <property type="evidence" value="ECO:0007669"/>
    <property type="project" value="UniProtKB-UniRule"/>
</dbReference>
<dbReference type="Gene3D" id="1.10.150.20">
    <property type="entry name" value="5' to 3' exonuclease, C-terminal subdomain"/>
    <property type="match status" value="1"/>
</dbReference>
<dbReference type="Gene3D" id="1.10.8.10">
    <property type="entry name" value="DNA helicase RuvA subunit, C-terminal domain"/>
    <property type="match status" value="1"/>
</dbReference>
<dbReference type="Gene3D" id="2.40.50.140">
    <property type="entry name" value="Nucleic acid-binding proteins"/>
    <property type="match status" value="1"/>
</dbReference>
<dbReference type="HAMAP" id="MF_00031">
    <property type="entry name" value="DNA_HJ_migration_RuvA"/>
    <property type="match status" value="1"/>
</dbReference>
<dbReference type="InterPro" id="IPR013849">
    <property type="entry name" value="DNA_helicase_Holl-junc_RuvA_I"/>
</dbReference>
<dbReference type="InterPro" id="IPR012340">
    <property type="entry name" value="NA-bd_OB-fold"/>
</dbReference>
<dbReference type="InterPro" id="IPR000085">
    <property type="entry name" value="RuvA"/>
</dbReference>
<dbReference type="InterPro" id="IPR010994">
    <property type="entry name" value="RuvA_2-like"/>
</dbReference>
<dbReference type="InterPro" id="IPR011114">
    <property type="entry name" value="RuvA_C"/>
</dbReference>
<dbReference type="InterPro" id="IPR036267">
    <property type="entry name" value="RuvA_C_sf"/>
</dbReference>
<dbReference type="NCBIfam" id="TIGR00084">
    <property type="entry name" value="ruvA"/>
    <property type="match status" value="1"/>
</dbReference>
<dbReference type="Pfam" id="PF14520">
    <property type="entry name" value="HHH_5"/>
    <property type="match status" value="1"/>
</dbReference>
<dbReference type="Pfam" id="PF07499">
    <property type="entry name" value="RuvA_C"/>
    <property type="match status" value="1"/>
</dbReference>
<dbReference type="Pfam" id="PF01330">
    <property type="entry name" value="RuvA_N"/>
    <property type="match status" value="1"/>
</dbReference>
<dbReference type="SUPFAM" id="SSF46929">
    <property type="entry name" value="DNA helicase RuvA subunit, C-terminal domain"/>
    <property type="match status" value="1"/>
</dbReference>
<dbReference type="SUPFAM" id="SSF50249">
    <property type="entry name" value="Nucleic acid-binding proteins"/>
    <property type="match status" value="1"/>
</dbReference>
<dbReference type="SUPFAM" id="SSF47781">
    <property type="entry name" value="RuvA domain 2-like"/>
    <property type="match status" value="1"/>
</dbReference>
<evidence type="ECO:0000255" key="1">
    <source>
        <dbReference type="HAMAP-Rule" id="MF_00031"/>
    </source>
</evidence>
<proteinExistence type="inferred from homology"/>
<keyword id="KW-0963">Cytoplasm</keyword>
<keyword id="KW-0227">DNA damage</keyword>
<keyword id="KW-0233">DNA recombination</keyword>
<keyword id="KW-0234">DNA repair</keyword>
<keyword id="KW-0238">DNA-binding</keyword>
<keyword id="KW-1185">Reference proteome</keyword>
<organism>
    <name type="scientific">Methylobacterium nodulans (strain LMG 21967 / CNCM I-2342 / ORS 2060)</name>
    <dbReference type="NCBI Taxonomy" id="460265"/>
    <lineage>
        <taxon>Bacteria</taxon>
        <taxon>Pseudomonadati</taxon>
        <taxon>Pseudomonadota</taxon>
        <taxon>Alphaproteobacteria</taxon>
        <taxon>Hyphomicrobiales</taxon>
        <taxon>Methylobacteriaceae</taxon>
        <taxon>Methylobacterium</taxon>
    </lineage>
</organism>
<reference key="1">
    <citation type="submission" date="2009-01" db="EMBL/GenBank/DDBJ databases">
        <title>Complete sequence of chromosome of Methylobacterium nodulans ORS 2060.</title>
        <authorList>
            <consortium name="US DOE Joint Genome Institute"/>
            <person name="Lucas S."/>
            <person name="Copeland A."/>
            <person name="Lapidus A."/>
            <person name="Glavina del Rio T."/>
            <person name="Dalin E."/>
            <person name="Tice H."/>
            <person name="Bruce D."/>
            <person name="Goodwin L."/>
            <person name="Pitluck S."/>
            <person name="Sims D."/>
            <person name="Brettin T."/>
            <person name="Detter J.C."/>
            <person name="Han C."/>
            <person name="Larimer F."/>
            <person name="Land M."/>
            <person name="Hauser L."/>
            <person name="Kyrpides N."/>
            <person name="Ivanova N."/>
            <person name="Marx C.J."/>
            <person name="Richardson P."/>
        </authorList>
    </citation>
    <scope>NUCLEOTIDE SEQUENCE [LARGE SCALE GENOMIC DNA]</scope>
    <source>
        <strain>LMG 21967 / CNCM I-2342 / ORS 2060</strain>
    </source>
</reference>